<evidence type="ECO:0000255" key="1">
    <source>
        <dbReference type="HAMAP-Rule" id="MF_00049"/>
    </source>
</evidence>
<gene>
    <name evidence="1" type="primary">leuS</name>
    <name type="ordered locus">Spy49_0152</name>
</gene>
<comment type="catalytic activity">
    <reaction evidence="1">
        <text>tRNA(Leu) + L-leucine + ATP = L-leucyl-tRNA(Leu) + AMP + diphosphate</text>
        <dbReference type="Rhea" id="RHEA:11688"/>
        <dbReference type="Rhea" id="RHEA-COMP:9613"/>
        <dbReference type="Rhea" id="RHEA-COMP:9622"/>
        <dbReference type="ChEBI" id="CHEBI:30616"/>
        <dbReference type="ChEBI" id="CHEBI:33019"/>
        <dbReference type="ChEBI" id="CHEBI:57427"/>
        <dbReference type="ChEBI" id="CHEBI:78442"/>
        <dbReference type="ChEBI" id="CHEBI:78494"/>
        <dbReference type="ChEBI" id="CHEBI:456215"/>
        <dbReference type="EC" id="6.1.1.4"/>
    </reaction>
</comment>
<comment type="subcellular location">
    <subcellularLocation>
        <location evidence="1">Cytoplasm</location>
    </subcellularLocation>
</comment>
<comment type="similarity">
    <text evidence="1">Belongs to the class-I aminoacyl-tRNA synthetase family.</text>
</comment>
<organism>
    <name type="scientific">Streptococcus pyogenes serotype M49 (strain NZ131)</name>
    <dbReference type="NCBI Taxonomy" id="471876"/>
    <lineage>
        <taxon>Bacteria</taxon>
        <taxon>Bacillati</taxon>
        <taxon>Bacillota</taxon>
        <taxon>Bacilli</taxon>
        <taxon>Lactobacillales</taxon>
        <taxon>Streptococcaceae</taxon>
        <taxon>Streptococcus</taxon>
    </lineage>
</organism>
<reference key="1">
    <citation type="journal article" date="2008" name="J. Bacteriol.">
        <title>Genome sequence of a nephritogenic and highly transformable M49 strain of Streptococcus pyogenes.</title>
        <authorList>
            <person name="McShan W.M."/>
            <person name="Ferretti J.J."/>
            <person name="Karasawa T."/>
            <person name="Suvorov A.N."/>
            <person name="Lin S."/>
            <person name="Qin B."/>
            <person name="Jia H."/>
            <person name="Kenton S."/>
            <person name="Najar F."/>
            <person name="Wu H."/>
            <person name="Scott J."/>
            <person name="Roe B.A."/>
            <person name="Savic D.J."/>
        </authorList>
    </citation>
    <scope>NUCLEOTIDE SEQUENCE [LARGE SCALE GENOMIC DNA]</scope>
    <source>
        <strain>NZ131</strain>
    </source>
</reference>
<proteinExistence type="inferred from homology"/>
<keyword id="KW-0030">Aminoacyl-tRNA synthetase</keyword>
<keyword id="KW-0067">ATP-binding</keyword>
<keyword id="KW-0963">Cytoplasm</keyword>
<keyword id="KW-0436">Ligase</keyword>
<keyword id="KW-0547">Nucleotide-binding</keyword>
<keyword id="KW-0648">Protein biosynthesis</keyword>
<name>SYL_STRPZ</name>
<sequence>MTFYDHTAIEPKWQAFWADNHTFKTGTDASKPKFYALDMFPYPSGAGLHVGHPEGYTATDILSRFKRAQGHNVLHPMGWDAFGLPAEQYAMDTGNDPAEFTAENIANFKRQINALGFSYDWDREVNTTDPNYYKWTQWIFTELYEKGLAYEAEVPVNWVEELGTAIANEEVLPDGTSERGGYPVVRKPMRQWMLKITAYAERLLEDLEEVDWPESIKDMQRNWIGKSTGANVTFKVKDTDKDFTVFTTRPDTLFGATYAVLAPEHALVDAITTADQAEAVADYKRQASLKSDLARTDLAKEKTGVWTGSYAINPVNGNEMPVWIADYVLASYGTGAIMAVPAHDERDWEFAKQFNLDIIPVLEGGNVEEAAFTEDGLHINSDFLDGLDKASAIAKMVEWLEAEGVGNEKVTYRLRDWLFSRQRYWGEPIPIIHWEDGTSTAVPESELPLVLPVTKDIRPSGTGESPLANVTDWLEVTREDGVKGRRETNTMPQWAGSSWYYLRYIDPHNTEKLADEELLKQWLPVDIYVGGAEHAVLHLLYARFWHKVLYDLGVVPTKEPFQKLFNQGMILGTSYRDSRGALVATDKVEKRDGSFFHVETGEELEQAPAKMSKSLKNVVNPDDVVEQYGADTLRVYEMFMGPLDASIAWSEEGLEGSRKFLDRVYRLITTKEITEENSGALDKVYNETVKAVTEQVDQMKFNTAIAQLMVFVNAANKEDKLFSDYAKGFVQLIAPFAPHLGEELWQALTASGESISYVPWPSYDKSKLVENDVEIVVQIKGKVKAKLVVAKDLSREELQEVALANEKVQAEIAGKDIIKVIAVPNKLVNIVIK</sequence>
<feature type="chain" id="PRO_1000091372" description="Leucine--tRNA ligase">
    <location>
        <begin position="1"/>
        <end position="833"/>
    </location>
</feature>
<feature type="short sequence motif" description="'HIGH' region">
    <location>
        <begin position="41"/>
        <end position="52"/>
    </location>
</feature>
<feature type="short sequence motif" description="'KMSKS' region">
    <location>
        <begin position="610"/>
        <end position="614"/>
    </location>
</feature>
<feature type="binding site" evidence="1">
    <location>
        <position position="613"/>
    </location>
    <ligand>
        <name>ATP</name>
        <dbReference type="ChEBI" id="CHEBI:30616"/>
    </ligand>
</feature>
<dbReference type="EC" id="6.1.1.4" evidence="1"/>
<dbReference type="EMBL" id="CP000829">
    <property type="protein sequence ID" value="ACI60501.1"/>
    <property type="molecule type" value="Genomic_DNA"/>
</dbReference>
<dbReference type="SMR" id="B5XJI9"/>
<dbReference type="KEGG" id="soz:Spy49_0152"/>
<dbReference type="HOGENOM" id="CLU_004427_0_0_9"/>
<dbReference type="Proteomes" id="UP000001039">
    <property type="component" value="Chromosome"/>
</dbReference>
<dbReference type="GO" id="GO:0005829">
    <property type="term" value="C:cytosol"/>
    <property type="evidence" value="ECO:0007669"/>
    <property type="project" value="TreeGrafter"/>
</dbReference>
<dbReference type="GO" id="GO:0002161">
    <property type="term" value="F:aminoacyl-tRNA deacylase activity"/>
    <property type="evidence" value="ECO:0007669"/>
    <property type="project" value="InterPro"/>
</dbReference>
<dbReference type="GO" id="GO:0005524">
    <property type="term" value="F:ATP binding"/>
    <property type="evidence" value="ECO:0007669"/>
    <property type="project" value="UniProtKB-UniRule"/>
</dbReference>
<dbReference type="GO" id="GO:0004823">
    <property type="term" value="F:leucine-tRNA ligase activity"/>
    <property type="evidence" value="ECO:0007669"/>
    <property type="project" value="UniProtKB-UniRule"/>
</dbReference>
<dbReference type="GO" id="GO:0006429">
    <property type="term" value="P:leucyl-tRNA aminoacylation"/>
    <property type="evidence" value="ECO:0007669"/>
    <property type="project" value="UniProtKB-UniRule"/>
</dbReference>
<dbReference type="CDD" id="cd07958">
    <property type="entry name" value="Anticodon_Ia_Leu_BEm"/>
    <property type="match status" value="1"/>
</dbReference>
<dbReference type="CDD" id="cd00812">
    <property type="entry name" value="LeuRS_core"/>
    <property type="match status" value="1"/>
</dbReference>
<dbReference type="FunFam" id="1.10.730.10:FF:000012">
    <property type="entry name" value="Leucine--tRNA ligase"/>
    <property type="match status" value="1"/>
</dbReference>
<dbReference type="FunFam" id="3.40.50.620:FF:000056">
    <property type="entry name" value="Leucine--tRNA ligase"/>
    <property type="match status" value="1"/>
</dbReference>
<dbReference type="FunFam" id="3.40.50.620:FF:000077">
    <property type="entry name" value="Leucine--tRNA ligase"/>
    <property type="match status" value="1"/>
</dbReference>
<dbReference type="FunFam" id="1.10.730.10:FF:000011">
    <property type="entry name" value="Leucine--tRNA ligase chloroplastic/mitochondrial"/>
    <property type="match status" value="1"/>
</dbReference>
<dbReference type="Gene3D" id="3.40.50.620">
    <property type="entry name" value="HUPs"/>
    <property type="match status" value="2"/>
</dbReference>
<dbReference type="Gene3D" id="1.10.730.10">
    <property type="entry name" value="Isoleucyl-tRNA Synthetase, Domain 1"/>
    <property type="match status" value="1"/>
</dbReference>
<dbReference type="Gene3D" id="3.90.740.10">
    <property type="entry name" value="Valyl/Leucyl/Isoleucyl-tRNA synthetase, editing domain"/>
    <property type="match status" value="1"/>
</dbReference>
<dbReference type="HAMAP" id="MF_00049_B">
    <property type="entry name" value="Leu_tRNA_synth_B"/>
    <property type="match status" value="1"/>
</dbReference>
<dbReference type="InterPro" id="IPR001412">
    <property type="entry name" value="aa-tRNA-synth_I_CS"/>
</dbReference>
<dbReference type="InterPro" id="IPR002300">
    <property type="entry name" value="aa-tRNA-synth_Ia"/>
</dbReference>
<dbReference type="InterPro" id="IPR002302">
    <property type="entry name" value="Leu-tRNA-ligase"/>
</dbReference>
<dbReference type="InterPro" id="IPR025709">
    <property type="entry name" value="Leu_tRNA-synth_edit"/>
</dbReference>
<dbReference type="InterPro" id="IPR013155">
    <property type="entry name" value="M/V/L/I-tRNA-synth_anticd-bd"/>
</dbReference>
<dbReference type="InterPro" id="IPR015413">
    <property type="entry name" value="Methionyl/Leucyl_tRNA_Synth"/>
</dbReference>
<dbReference type="InterPro" id="IPR014729">
    <property type="entry name" value="Rossmann-like_a/b/a_fold"/>
</dbReference>
<dbReference type="InterPro" id="IPR009080">
    <property type="entry name" value="tRNAsynth_Ia_anticodon-bd"/>
</dbReference>
<dbReference type="InterPro" id="IPR009008">
    <property type="entry name" value="Val/Leu/Ile-tRNA-synth_edit"/>
</dbReference>
<dbReference type="NCBIfam" id="TIGR00396">
    <property type="entry name" value="leuS_bact"/>
    <property type="match status" value="1"/>
</dbReference>
<dbReference type="PANTHER" id="PTHR43740:SF2">
    <property type="entry name" value="LEUCINE--TRNA LIGASE, MITOCHONDRIAL"/>
    <property type="match status" value="1"/>
</dbReference>
<dbReference type="PANTHER" id="PTHR43740">
    <property type="entry name" value="LEUCYL-TRNA SYNTHETASE"/>
    <property type="match status" value="1"/>
</dbReference>
<dbReference type="Pfam" id="PF08264">
    <property type="entry name" value="Anticodon_1"/>
    <property type="match status" value="1"/>
</dbReference>
<dbReference type="Pfam" id="PF00133">
    <property type="entry name" value="tRNA-synt_1"/>
    <property type="match status" value="2"/>
</dbReference>
<dbReference type="Pfam" id="PF13603">
    <property type="entry name" value="tRNA-synt_1_2"/>
    <property type="match status" value="1"/>
</dbReference>
<dbReference type="Pfam" id="PF09334">
    <property type="entry name" value="tRNA-synt_1g"/>
    <property type="match status" value="1"/>
</dbReference>
<dbReference type="PRINTS" id="PR00985">
    <property type="entry name" value="TRNASYNTHLEU"/>
</dbReference>
<dbReference type="SUPFAM" id="SSF47323">
    <property type="entry name" value="Anticodon-binding domain of a subclass of class I aminoacyl-tRNA synthetases"/>
    <property type="match status" value="1"/>
</dbReference>
<dbReference type="SUPFAM" id="SSF52374">
    <property type="entry name" value="Nucleotidylyl transferase"/>
    <property type="match status" value="1"/>
</dbReference>
<dbReference type="SUPFAM" id="SSF50677">
    <property type="entry name" value="ValRS/IleRS/LeuRS editing domain"/>
    <property type="match status" value="1"/>
</dbReference>
<dbReference type="PROSITE" id="PS00178">
    <property type="entry name" value="AA_TRNA_LIGASE_I"/>
    <property type="match status" value="1"/>
</dbReference>
<protein>
    <recommendedName>
        <fullName evidence="1">Leucine--tRNA ligase</fullName>
        <ecNumber evidence="1">6.1.1.4</ecNumber>
    </recommendedName>
    <alternativeName>
        <fullName evidence="1">Leucyl-tRNA synthetase</fullName>
        <shortName evidence="1">LeuRS</shortName>
    </alternativeName>
</protein>
<accession>B5XJI9</accession>